<proteinExistence type="inferred from homology"/>
<comment type="function">
    <text evidence="1">Allows the formation of correctly charged Gln-tRNA(Gln) through the transamidation of misacylated Glu-tRNA(Gln) in organisms which lack glutaminyl-tRNA synthetase. The reaction takes place in the presence of glutamine and ATP through an activated gamma-phospho-Glu-tRNA(Gln). The GatDE system is specific for glutamate and does not act on aspartate.</text>
</comment>
<comment type="catalytic activity">
    <reaction evidence="1">
        <text>L-glutamyl-tRNA(Gln) + L-glutamine + ATP + H2O = L-glutaminyl-tRNA(Gln) + L-glutamate + ADP + phosphate + H(+)</text>
        <dbReference type="Rhea" id="RHEA:17521"/>
        <dbReference type="Rhea" id="RHEA-COMP:9681"/>
        <dbReference type="Rhea" id="RHEA-COMP:9684"/>
        <dbReference type="ChEBI" id="CHEBI:15377"/>
        <dbReference type="ChEBI" id="CHEBI:15378"/>
        <dbReference type="ChEBI" id="CHEBI:29985"/>
        <dbReference type="ChEBI" id="CHEBI:30616"/>
        <dbReference type="ChEBI" id="CHEBI:43474"/>
        <dbReference type="ChEBI" id="CHEBI:58359"/>
        <dbReference type="ChEBI" id="CHEBI:78520"/>
        <dbReference type="ChEBI" id="CHEBI:78521"/>
        <dbReference type="ChEBI" id="CHEBI:456216"/>
    </reaction>
</comment>
<comment type="subunit">
    <text evidence="1">Heterodimer of GatD and GatE.</text>
</comment>
<comment type="similarity">
    <text evidence="1">Belongs to the GatB/GatE family. GatE subfamily.</text>
</comment>
<gene>
    <name evidence="1" type="primary">gatE</name>
    <name type="ordered locus">MK0129</name>
</gene>
<organism>
    <name type="scientific">Methanopyrus kandleri (strain AV19 / DSM 6324 / JCM 9639 / NBRC 100938)</name>
    <dbReference type="NCBI Taxonomy" id="190192"/>
    <lineage>
        <taxon>Archaea</taxon>
        <taxon>Methanobacteriati</taxon>
        <taxon>Methanobacteriota</taxon>
        <taxon>Methanomada group</taxon>
        <taxon>Methanopyri</taxon>
        <taxon>Methanopyrales</taxon>
        <taxon>Methanopyraceae</taxon>
        <taxon>Methanopyrus</taxon>
    </lineage>
</organism>
<feature type="chain" id="PRO_0000140073" description="Glutamyl-tRNA(Gln) amidotransferase subunit E">
    <location>
        <begin position="1"/>
        <end position="640"/>
    </location>
</feature>
<dbReference type="EC" id="6.3.5.-" evidence="1"/>
<dbReference type="EMBL" id="AE009439">
    <property type="protein sequence ID" value="AAM01346.1"/>
    <property type="molecule type" value="Genomic_DNA"/>
</dbReference>
<dbReference type="RefSeq" id="WP_011018501.1">
    <property type="nucleotide sequence ID" value="NC_003551.1"/>
</dbReference>
<dbReference type="SMR" id="Q8TZ12"/>
<dbReference type="FunCoup" id="Q8TZ12">
    <property type="interactions" value="27"/>
</dbReference>
<dbReference type="STRING" id="190192.MK0129"/>
<dbReference type="PaxDb" id="190192-MK0129"/>
<dbReference type="EnsemblBacteria" id="AAM01346">
    <property type="protein sequence ID" value="AAM01346"/>
    <property type="gene ID" value="MK0129"/>
</dbReference>
<dbReference type="GeneID" id="1477432"/>
<dbReference type="KEGG" id="mka:MK0129"/>
<dbReference type="PATRIC" id="fig|190192.8.peg.128"/>
<dbReference type="HOGENOM" id="CLU_030702_0_0_2"/>
<dbReference type="InParanoid" id="Q8TZ12"/>
<dbReference type="OrthoDB" id="7316at2157"/>
<dbReference type="Proteomes" id="UP000001826">
    <property type="component" value="Chromosome"/>
</dbReference>
<dbReference type="GO" id="GO:0005737">
    <property type="term" value="C:cytoplasm"/>
    <property type="evidence" value="ECO:0007669"/>
    <property type="project" value="InterPro"/>
</dbReference>
<dbReference type="GO" id="GO:0004812">
    <property type="term" value="F:aminoacyl-tRNA ligase activity"/>
    <property type="evidence" value="ECO:0007669"/>
    <property type="project" value="InterPro"/>
</dbReference>
<dbReference type="GO" id="GO:0005524">
    <property type="term" value="F:ATP binding"/>
    <property type="evidence" value="ECO:0007669"/>
    <property type="project" value="UniProtKB-KW"/>
</dbReference>
<dbReference type="GO" id="GO:0050567">
    <property type="term" value="F:glutaminyl-tRNA synthase (glutamine-hydrolyzing) activity"/>
    <property type="evidence" value="ECO:0007669"/>
    <property type="project" value="UniProtKB-UniRule"/>
</dbReference>
<dbReference type="GO" id="GO:0070681">
    <property type="term" value="P:glutaminyl-tRNAGln biosynthesis via transamidation"/>
    <property type="evidence" value="ECO:0007669"/>
    <property type="project" value="TreeGrafter"/>
</dbReference>
<dbReference type="GO" id="GO:0006412">
    <property type="term" value="P:translation"/>
    <property type="evidence" value="ECO:0007669"/>
    <property type="project" value="UniProtKB-UniRule"/>
</dbReference>
<dbReference type="FunFam" id="3.30.1360.30:FF:000003">
    <property type="entry name" value="Glutamyl-tRNA(Gln) amidotransferase subunit E"/>
    <property type="match status" value="1"/>
</dbReference>
<dbReference type="Gene3D" id="1.10.10.410">
    <property type="match status" value="1"/>
</dbReference>
<dbReference type="Gene3D" id="3.30.1360.30">
    <property type="entry name" value="GAD-like domain"/>
    <property type="match status" value="1"/>
</dbReference>
<dbReference type="Gene3D" id="1.10.150.380">
    <property type="entry name" value="GatB domain, N-terminal subdomain"/>
    <property type="match status" value="1"/>
</dbReference>
<dbReference type="HAMAP" id="MF_00588">
    <property type="entry name" value="GatE"/>
    <property type="match status" value="1"/>
</dbReference>
<dbReference type="InterPro" id="IPR017959">
    <property type="entry name" value="Asn/Gln-tRNA_amidoTrfase_suB/E"/>
</dbReference>
<dbReference type="InterPro" id="IPR006075">
    <property type="entry name" value="Asn/Gln-tRNA_Trfase_suB/E_cat"/>
</dbReference>
<dbReference type="InterPro" id="IPR018027">
    <property type="entry name" value="Asn/Gln_amidotransferase"/>
</dbReference>
<dbReference type="InterPro" id="IPR003789">
    <property type="entry name" value="Asn/Gln_tRNA_amidoTrase-B-like"/>
</dbReference>
<dbReference type="InterPro" id="IPR004115">
    <property type="entry name" value="GAD-like_sf"/>
</dbReference>
<dbReference type="InterPro" id="IPR029351">
    <property type="entry name" value="GAD_dom"/>
</dbReference>
<dbReference type="InterPro" id="IPR042114">
    <property type="entry name" value="GatB_C_1"/>
</dbReference>
<dbReference type="InterPro" id="IPR023168">
    <property type="entry name" value="GatB_Yqey_C_2"/>
</dbReference>
<dbReference type="InterPro" id="IPR004414">
    <property type="entry name" value="GatE"/>
</dbReference>
<dbReference type="InterPro" id="IPR017958">
    <property type="entry name" value="Gln-tRNA_amidoTrfase_suB_CS"/>
</dbReference>
<dbReference type="InterPro" id="IPR014746">
    <property type="entry name" value="Gln_synth/guanido_kin_cat_dom"/>
</dbReference>
<dbReference type="NCBIfam" id="TIGR00134">
    <property type="entry name" value="gatE_arch"/>
    <property type="match status" value="1"/>
</dbReference>
<dbReference type="NCBIfam" id="NF003107">
    <property type="entry name" value="PRK04028.1"/>
    <property type="match status" value="1"/>
</dbReference>
<dbReference type="PANTHER" id="PTHR11659">
    <property type="entry name" value="GLUTAMYL-TRNA GLN AMIDOTRANSFERASE SUBUNIT B MITOCHONDRIAL AND PROKARYOTIC PET112-RELATED"/>
    <property type="match status" value="1"/>
</dbReference>
<dbReference type="PANTHER" id="PTHR11659:SF2">
    <property type="entry name" value="GLUTAMYL-TRNA(GLN) AMIDOTRANSFERASE SUBUNIT E"/>
    <property type="match status" value="1"/>
</dbReference>
<dbReference type="Pfam" id="PF02938">
    <property type="entry name" value="GAD"/>
    <property type="match status" value="1"/>
</dbReference>
<dbReference type="Pfam" id="PF02934">
    <property type="entry name" value="GatB_N"/>
    <property type="match status" value="1"/>
</dbReference>
<dbReference type="Pfam" id="PF02637">
    <property type="entry name" value="GatB_Yqey"/>
    <property type="match status" value="1"/>
</dbReference>
<dbReference type="SMART" id="SM00845">
    <property type="entry name" value="GatB_Yqey"/>
    <property type="match status" value="1"/>
</dbReference>
<dbReference type="SUPFAM" id="SSF55261">
    <property type="entry name" value="GAD domain-like"/>
    <property type="match status" value="1"/>
</dbReference>
<dbReference type="SUPFAM" id="SSF89095">
    <property type="entry name" value="GatB/YqeY motif"/>
    <property type="match status" value="1"/>
</dbReference>
<dbReference type="SUPFAM" id="SSF55931">
    <property type="entry name" value="Glutamine synthetase/guanido kinase"/>
    <property type="match status" value="1"/>
</dbReference>
<dbReference type="PROSITE" id="PS01234">
    <property type="entry name" value="GATB"/>
    <property type="match status" value="1"/>
</dbReference>
<reference key="1">
    <citation type="journal article" date="2002" name="Proc. Natl. Acad. Sci. U.S.A.">
        <title>The complete genome of hyperthermophile Methanopyrus kandleri AV19 and monophyly of archaeal methanogens.</title>
        <authorList>
            <person name="Slesarev A.I."/>
            <person name="Mezhevaya K.V."/>
            <person name="Makarova K.S."/>
            <person name="Polushin N.N."/>
            <person name="Shcherbinina O.V."/>
            <person name="Shakhova V.V."/>
            <person name="Belova G.I."/>
            <person name="Aravind L."/>
            <person name="Natale D.A."/>
            <person name="Rogozin I.B."/>
            <person name="Tatusov R.L."/>
            <person name="Wolf Y.I."/>
            <person name="Stetter K.O."/>
            <person name="Malykh A.G."/>
            <person name="Koonin E.V."/>
            <person name="Kozyavkin S.A."/>
        </authorList>
    </citation>
    <scope>NUCLEOTIDE SEQUENCE [LARGE SCALE GENOMIC DNA]</scope>
    <source>
        <strain>AV19 / DSM 6324 / JCM 9639 / NBRC 100938</strain>
    </source>
</reference>
<protein>
    <recommendedName>
        <fullName evidence="1">Glutamyl-tRNA(Gln) amidotransferase subunit E</fullName>
        <shortName evidence="1">Glu-ADT subunit E</shortName>
        <ecNumber evidence="1">6.3.5.-</ecNumber>
    </recommendedName>
</protein>
<evidence type="ECO:0000255" key="1">
    <source>
        <dbReference type="HAMAP-Rule" id="MF_00588"/>
    </source>
</evidence>
<name>GATE_METKA</name>
<keyword id="KW-0067">ATP-binding</keyword>
<keyword id="KW-0436">Ligase</keyword>
<keyword id="KW-0547">Nucleotide-binding</keyword>
<keyword id="KW-0648">Protein biosynthesis</keyword>
<keyword id="KW-1185">Reference proteome</keyword>
<sequence>MREEDLDWEEIGLRVGLEIHRQLDTSRKLFCRCTPELVEEVPKEPKVRRKLRPVQSEMGEFDPAALEEFKRDRTFYYLADGSFSCLVELDEEPPHEPCSEALDVAIKVTLLLGGSVVDEVHVMRKMVIDGSNTTGFQRTMLVGFGGEVPTSEGPVRISTVCLEEDAARKVKGRDQDLEVDYCLDRLGIPLIEVSTEPDIRTPEQAREAAERIGEAIKAVGGVKSGIGTVRQDVNVSIEGGAVQEIKGVQDLNLIPKVVKYEALRQANLLRIRDELRERGVSETDLIDCEPMDVTDVFEDTDSEVIRRELERGGVVYALLLPGFEGILGWELCPGRRFGTELADYARRRGVSGLFHSDELPKYGISEEEVEAVRQRLGAEDGDGFVLIAGPEDRVKSAMEAVKDRAIMALKGVPAETRRARKDGTTEYMRPRPGAARMYPETDIPPVVIDEDRVKELAEELPEKPWERKERLAEEYGLGEELVEQMFEHGVVDEFEEIVEETGVEPKVAAATLVNTIPRLEKDGYPVDNLTIDHVKEVLRLYAEGAIAKSGIEELLGALAADPDSDPEELAEELGIVMASEEEIEEVVEEAIRRYEDKIRERGMAVMGKIMGEVMEVLRGRADGKRVSELVRERIREISGE</sequence>
<accession>Q8TZ12</accession>